<protein>
    <recommendedName>
        <fullName evidence="1">Protein E7</fullName>
    </recommendedName>
</protein>
<reference key="1">
    <citation type="submission" date="1995-10" db="EMBL/GenBank/DDBJ databases">
        <authorList>
            <person name="Delius H."/>
        </authorList>
    </citation>
    <scope>NUCLEOTIDE SEQUENCE [GENOMIC DNA]</scope>
</reference>
<reference key="2">
    <citation type="journal article" date="2002" name="Rev. Med. Virol.">
        <title>Interactions of SV40 large T antigen and other viral proteins with retinoblastoma tumour suppressor.</title>
        <authorList>
            <person name="Lee C."/>
            <person name="Cho Y."/>
        </authorList>
    </citation>
    <scope>REVIEW</scope>
</reference>
<sequence length="97" mass="10641">MHGNYTTLKEIVLQLEPPDPVGLHCNEQLDSSEDEVDELATQATQDVTQPYQIVTTCGTCSRKVRLVVQCTGTDIHHLHTLLLGSLDILCPVCAPKT</sequence>
<organismHost>
    <name type="scientific">Homo sapiens</name>
    <name type="common">Human</name>
    <dbReference type="NCBI Taxonomy" id="9606"/>
</organismHost>
<proteinExistence type="inferred from homology"/>
<keyword id="KW-0010">Activator</keyword>
<keyword id="KW-0238">DNA-binding</keyword>
<keyword id="KW-0244">Early protein</keyword>
<keyword id="KW-1078">G1/S host cell cycle checkpoint dysregulation by virus</keyword>
<keyword id="KW-1035">Host cytoplasm</keyword>
<keyword id="KW-1048">Host nucleus</keyword>
<keyword id="KW-0945">Host-virus interaction</keyword>
<keyword id="KW-1090">Inhibition of host innate immune response by virus</keyword>
<keyword id="KW-1114">Inhibition of host interferon signaling pathway by virus</keyword>
<keyword id="KW-0922">Interferon antiviral system evasion</keyword>
<keyword id="KW-0479">Metal-binding</keyword>
<keyword id="KW-1121">Modulation of host cell cycle by virus</keyword>
<keyword id="KW-0553">Oncogene</keyword>
<keyword id="KW-1185">Reference proteome</keyword>
<keyword id="KW-0804">Transcription</keyword>
<keyword id="KW-0805">Transcription regulation</keyword>
<keyword id="KW-0899">Viral immunoevasion</keyword>
<keyword id="KW-0862">Zinc</keyword>
<keyword id="KW-0863">Zinc-finger</keyword>
<evidence type="ECO:0000255" key="1">
    <source>
        <dbReference type="HAMAP-Rule" id="MF_04004"/>
    </source>
</evidence>
<comment type="function">
    <text evidence="1">Plays a role in viral genome replication by driving entry of quiescent cells into the cell cycle. Stimulation of progression from G1 to S phase allows the virus to efficiently use the cellular DNA replicating machinery to achieve viral genome replication. E7 protein has both transforming and trans-activating activities. Induces the disassembly of the E2F1 transcription factor from RB1, with subsequent transcriptional activation of E2F1-regulated S-phase genes. Interferes with host histone deacetylation mediated by HDAC1 and HDAC2, leading to transcription activation. Also plays a role in the inhibition of both antiviral and antiproliferative functions of host interferon alpha. Interaction with host TMEM173/STING impairs the ability of TMEM173/STING to sense cytosolic DNA and promote the production of type I interferon (IFN-alpha and IFN-beta).</text>
</comment>
<comment type="subunit">
    <text evidence="1">Homodimer. Homooligomer. Interacts with host RB1; this interaction induces dissociation of RB1-E2F1 complex thereby disrupting RB1 activity. Interacts with host EP300; this interaction represses EP300 transcriptional activity. Interacts with protein E2; this interaction inhibits E7 oncogenic activity. Interacts with host TMEM173/STING; this interaction impairs the ability of TMEM173/STING to sense cytosolic DNA and promote the production of type I interferon (IFN-alpha and IFN-beta).</text>
</comment>
<comment type="subcellular location">
    <subcellularLocation>
        <location evidence="1">Host cytoplasm</location>
    </subcellularLocation>
    <subcellularLocation>
        <location evidence="1">Host nucleus</location>
    </subcellularLocation>
    <text evidence="1">Predominantly found in the host nucleus.</text>
</comment>
<comment type="domain">
    <text evidence="1">The E7 terminal domain is an intrinsically disordered domain, whose flexibility and conformational transitions confer target adaptability to the oncoprotein. It allows adaptation to a variety of protein targets and exposes the PEST degradation sequence that regulates its turnover in the cell.</text>
</comment>
<comment type="PTM">
    <text evidence="1">Highly phosphorylated.</text>
</comment>
<comment type="similarity">
    <text evidence="1">Belongs to the papillomaviridae E7 protein family.</text>
</comment>
<gene>
    <name evidence="1" type="primary">E7</name>
</gene>
<organism>
    <name type="scientific">Human papillomavirus 44</name>
    <dbReference type="NCBI Taxonomy" id="10592"/>
    <lineage>
        <taxon>Viruses</taxon>
        <taxon>Monodnaviria</taxon>
        <taxon>Shotokuvirae</taxon>
        <taxon>Cossaviricota</taxon>
        <taxon>Papovaviricetes</taxon>
        <taxon>Zurhausenvirales</taxon>
        <taxon>Papillomaviridae</taxon>
        <taxon>Firstpapillomavirinae</taxon>
        <taxon>Alphapapillomavirus</taxon>
        <taxon>Alphapapillomavirus 10</taxon>
    </lineage>
</organism>
<dbReference type="EMBL" id="U31788">
    <property type="protein sequence ID" value="AAA79458.1"/>
    <property type="molecule type" value="Genomic_DNA"/>
</dbReference>
<dbReference type="SMR" id="Q80914"/>
<dbReference type="Proteomes" id="UP000009123">
    <property type="component" value="Genome"/>
</dbReference>
<dbReference type="GO" id="GO:0030430">
    <property type="term" value="C:host cell cytoplasm"/>
    <property type="evidence" value="ECO:0007669"/>
    <property type="project" value="UniProtKB-SubCell"/>
</dbReference>
<dbReference type="GO" id="GO:0042025">
    <property type="term" value="C:host cell nucleus"/>
    <property type="evidence" value="ECO:0007669"/>
    <property type="project" value="UniProtKB-SubCell"/>
</dbReference>
<dbReference type="GO" id="GO:0003677">
    <property type="term" value="F:DNA binding"/>
    <property type="evidence" value="ECO:0007669"/>
    <property type="project" value="UniProtKB-UniRule"/>
</dbReference>
<dbReference type="GO" id="GO:0003700">
    <property type="term" value="F:DNA-binding transcription factor activity"/>
    <property type="evidence" value="ECO:0007669"/>
    <property type="project" value="UniProtKB-UniRule"/>
</dbReference>
<dbReference type="GO" id="GO:0019904">
    <property type="term" value="F:protein domain specific binding"/>
    <property type="evidence" value="ECO:0007669"/>
    <property type="project" value="UniProtKB-UniRule"/>
</dbReference>
<dbReference type="GO" id="GO:0008270">
    <property type="term" value="F:zinc ion binding"/>
    <property type="evidence" value="ECO:0007669"/>
    <property type="project" value="UniProtKB-KW"/>
</dbReference>
<dbReference type="GO" id="GO:0006351">
    <property type="term" value="P:DNA-templated transcription"/>
    <property type="evidence" value="ECO:0007669"/>
    <property type="project" value="UniProtKB-UniRule"/>
</dbReference>
<dbReference type="GO" id="GO:0039645">
    <property type="term" value="P:symbiont-mediated perturbation of host cell cycle G1/S transition checkpoint"/>
    <property type="evidence" value="ECO:0007669"/>
    <property type="project" value="UniProtKB-UniRule"/>
</dbReference>
<dbReference type="GO" id="GO:0052170">
    <property type="term" value="P:symbiont-mediated suppression of host innate immune response"/>
    <property type="evidence" value="ECO:0007669"/>
    <property type="project" value="UniProtKB-KW"/>
</dbReference>
<dbReference type="GO" id="GO:0039502">
    <property type="term" value="P:symbiont-mediated suppression of host type I interferon-mediated signaling pathway"/>
    <property type="evidence" value="ECO:0007669"/>
    <property type="project" value="UniProtKB-UniRule"/>
</dbReference>
<dbReference type="Gene3D" id="3.30.160.330">
    <property type="match status" value="1"/>
</dbReference>
<dbReference type="HAMAP" id="MF_04004">
    <property type="entry name" value="PPV_E7"/>
    <property type="match status" value="1"/>
</dbReference>
<dbReference type="InterPro" id="IPR000148">
    <property type="entry name" value="Papilloma_E7"/>
</dbReference>
<dbReference type="Pfam" id="PF00527">
    <property type="entry name" value="E7"/>
    <property type="match status" value="1"/>
</dbReference>
<dbReference type="PIRSF" id="PIRSF003407">
    <property type="entry name" value="Papvi_E7"/>
    <property type="match status" value="1"/>
</dbReference>
<dbReference type="SUPFAM" id="SSF161234">
    <property type="entry name" value="E7 C-terminal domain-like"/>
    <property type="match status" value="1"/>
</dbReference>
<name>VE7_HPV44</name>
<accession>Q80914</accession>
<feature type="chain" id="PRO_0000133441" description="Protein E7">
    <location>
        <begin position="1"/>
        <end position="97"/>
    </location>
</feature>
<feature type="zinc finger region" evidence="1">
    <location>
        <begin position="57"/>
        <end position="93"/>
    </location>
</feature>
<feature type="region of interest" description="E7 terminal domain" evidence="1">
    <location>
        <begin position="1"/>
        <end position="41"/>
    </location>
</feature>
<feature type="short sequence motif" description="LXCXE motif; interaction with host RB1 and TMEM173/STING" evidence="1">
    <location>
        <begin position="23"/>
        <end position="27"/>
    </location>
</feature>
<feature type="short sequence motif" description="Nuclear export signal" evidence="1">
    <location>
        <begin position="75"/>
        <end position="83"/>
    </location>
</feature>